<keyword id="KW-0067">ATP-binding</keyword>
<keyword id="KW-0418">Kinase</keyword>
<keyword id="KW-0547">Nucleotide-binding</keyword>
<keyword id="KW-0539">Nucleus</keyword>
<keyword id="KW-0597">Phosphoprotein</keyword>
<keyword id="KW-1185">Reference proteome</keyword>
<keyword id="KW-0723">Serine/threonine-protein kinase</keyword>
<keyword id="KW-0808">Transferase</keyword>
<feature type="chain" id="PRO_0000454241" description="Cyclin-dependent kinase C-2 C">
    <location>
        <begin position="1"/>
        <end position="644"/>
    </location>
</feature>
<feature type="domain" description="Protein kinase" evidence="3">
    <location>
        <begin position="105"/>
        <end position="389"/>
    </location>
</feature>
<feature type="region of interest" description="Disordered" evidence="6">
    <location>
        <begin position="565"/>
        <end position="591"/>
    </location>
</feature>
<feature type="short sequence motif" description="Nuclear localization signal" evidence="4">
    <location>
        <begin position="420"/>
        <end position="427"/>
    </location>
</feature>
<feature type="compositionally biased region" description="Basic and acidic residues" evidence="6">
    <location>
        <begin position="565"/>
        <end position="576"/>
    </location>
</feature>
<feature type="active site" description="Proton acceptor" evidence="3 5">
    <location>
        <position position="229"/>
    </location>
</feature>
<feature type="binding site" evidence="3">
    <location>
        <begin position="111"/>
        <end position="119"/>
    </location>
    <ligand>
        <name>ATP</name>
        <dbReference type="ChEBI" id="CHEBI:30616"/>
    </ligand>
</feature>
<feature type="binding site" evidence="3">
    <location>
        <position position="134"/>
    </location>
    <ligand>
        <name>ATP</name>
        <dbReference type="ChEBI" id="CHEBI:30616"/>
    </ligand>
</feature>
<feature type="modified residue" description="Phosphotyrosine" evidence="1">
    <location>
        <position position="116"/>
    </location>
</feature>
<feature type="modified residue" description="Phosphothreonine" evidence="2">
    <location>
        <position position="263"/>
    </location>
</feature>
<feature type="sequence conflict" description="In Ref. 2; AAL56635." evidence="13" ref="2">
    <original>N</original>
    <variation>S</variation>
    <location>
        <position position="8"/>
    </location>
</feature>
<feature type="sequence conflict" description="In Ref. 2; AAL56635." evidence="13" ref="2">
    <original>L</original>
    <variation>I</variation>
    <location>
        <position position="26"/>
    </location>
</feature>
<feature type="sequence conflict" description="In Ref. 1; AAF21469." evidence="13" ref="1">
    <original>SLGS</original>
    <variation>TLGL</variation>
    <location>
        <begin position="65"/>
        <end position="68"/>
    </location>
</feature>
<feature type="sequence conflict" description="In Ref. 2; AAL56635." evidence="13" ref="2">
    <original>K</original>
    <variation>Q</variation>
    <location>
        <position position="456"/>
    </location>
</feature>
<feature type="sequence conflict" description="In Ref. 2; AAL56635." evidence="13" ref="2">
    <original>M</original>
    <variation>T</variation>
    <location>
        <position position="487"/>
    </location>
</feature>
<feature type="sequence conflict" description="In Ref. 1; AAF21469." evidence="13" ref="1">
    <original>EQDDR</original>
    <variation>GKPEIT</variation>
    <location>
        <begin position="640"/>
        <end position="644"/>
    </location>
</feature>
<accession>B5X564</accession>
<accession>Q8W2N0</accession>
<accession>Q9FLZ4</accession>
<accession>Q9SBZ2</accession>
<name>CDC2C_ARATH</name>
<organism>
    <name type="scientific">Arabidopsis thaliana</name>
    <name type="common">Mouse-ear cress</name>
    <dbReference type="NCBI Taxonomy" id="3702"/>
    <lineage>
        <taxon>Eukaryota</taxon>
        <taxon>Viridiplantae</taxon>
        <taxon>Streptophyta</taxon>
        <taxon>Embryophyta</taxon>
        <taxon>Tracheophyta</taxon>
        <taxon>Spermatophyta</taxon>
        <taxon>Magnoliopsida</taxon>
        <taxon>eudicotyledons</taxon>
        <taxon>Gunneridae</taxon>
        <taxon>Pentapetalae</taxon>
        <taxon>rosids</taxon>
        <taxon>malvids</taxon>
        <taxon>Brassicales</taxon>
        <taxon>Brassicaceae</taxon>
        <taxon>Camelineae</taxon>
        <taxon>Arabidopsis</taxon>
    </lineage>
</organism>
<gene>
    <name evidence="11" type="primary">CDC2C</name>
    <name evidence="12" type="synonym">CKL1</name>
    <name evidence="14" type="ordered locus">At5g39420</name>
    <name evidence="15" type="ORF">MUL8.100</name>
</gene>
<protein>
    <recommendedName>
        <fullName evidence="11">Cyclin-dependent kinase C-2 C</fullName>
        <shortName evidence="11">CDC2CAt</shortName>
        <shortName evidence="11">Protein cdc2 C</shortName>
        <ecNumber evidence="3">2.7.11.-</ecNumber>
    </recommendedName>
    <alternativeName>
        <fullName evidence="12">Cyclin-dependent kinase-like protein 1</fullName>
        <shortName evidence="12">CDK-like protein 1</shortName>
    </alternativeName>
</protein>
<dbReference type="EC" id="2.7.11.-" evidence="3"/>
<dbReference type="EMBL" id="U83118">
    <property type="protein sequence ID" value="AAF21469.1"/>
    <property type="status" value="ALT_SEQ"/>
    <property type="molecule type" value="Genomic_DNA"/>
</dbReference>
<dbReference type="EMBL" id="AF120153">
    <property type="protein sequence ID" value="AAL56635.1"/>
    <property type="molecule type" value="mRNA"/>
</dbReference>
<dbReference type="EMBL" id="AB009054">
    <property type="protein sequence ID" value="BAB11015.1"/>
    <property type="status" value="ALT_SEQ"/>
    <property type="molecule type" value="Genomic_DNA"/>
</dbReference>
<dbReference type="EMBL" id="CP002688">
    <property type="protein sequence ID" value="AED94431.1"/>
    <property type="molecule type" value="Genomic_DNA"/>
</dbReference>
<dbReference type="EMBL" id="BT046183">
    <property type="protein sequence ID" value="ACI49782.1"/>
    <property type="molecule type" value="mRNA"/>
</dbReference>
<dbReference type="RefSeq" id="NP_198758.2">
    <property type="nucleotide sequence ID" value="NM_123304.4"/>
</dbReference>
<dbReference type="SMR" id="B5X564"/>
<dbReference type="FunCoup" id="B5X564">
    <property type="interactions" value="817"/>
</dbReference>
<dbReference type="STRING" id="3702.B5X564"/>
<dbReference type="iPTMnet" id="B5X564"/>
<dbReference type="PaxDb" id="3702-AT5G39420.1"/>
<dbReference type="ProteomicsDB" id="181257"/>
<dbReference type="EnsemblPlants" id="AT5G39420.1">
    <property type="protein sequence ID" value="AT5G39420.1"/>
    <property type="gene ID" value="AT5G39420"/>
</dbReference>
<dbReference type="GeneID" id="833938"/>
<dbReference type="Gramene" id="AT5G39420.1">
    <property type="protein sequence ID" value="AT5G39420.1"/>
    <property type="gene ID" value="AT5G39420"/>
</dbReference>
<dbReference type="KEGG" id="ath:AT5G39420"/>
<dbReference type="Araport" id="AT5G39420"/>
<dbReference type="TAIR" id="AT5G39420">
    <property type="gene designation" value="CDC2CAT"/>
</dbReference>
<dbReference type="eggNOG" id="KOG0600">
    <property type="taxonomic scope" value="Eukaryota"/>
</dbReference>
<dbReference type="HOGENOM" id="CLU_000288_78_4_1"/>
<dbReference type="InParanoid" id="B5X564"/>
<dbReference type="OMA" id="PADSFWK"/>
<dbReference type="PhylomeDB" id="B5X564"/>
<dbReference type="PRO" id="PR:B5X564"/>
<dbReference type="Proteomes" id="UP000006548">
    <property type="component" value="Chromosome 5"/>
</dbReference>
<dbReference type="ExpressionAtlas" id="B5X564">
    <property type="expression patterns" value="baseline and differential"/>
</dbReference>
<dbReference type="GO" id="GO:0005634">
    <property type="term" value="C:nucleus"/>
    <property type="evidence" value="ECO:0007669"/>
    <property type="project" value="UniProtKB-SubCell"/>
</dbReference>
<dbReference type="GO" id="GO:0005524">
    <property type="term" value="F:ATP binding"/>
    <property type="evidence" value="ECO:0007669"/>
    <property type="project" value="UniProtKB-KW"/>
</dbReference>
<dbReference type="GO" id="GO:0004674">
    <property type="term" value="F:protein serine/threonine kinase activity"/>
    <property type="evidence" value="ECO:0007669"/>
    <property type="project" value="UniProtKB-KW"/>
</dbReference>
<dbReference type="CDD" id="cd07840">
    <property type="entry name" value="STKc_CDK9_like"/>
    <property type="match status" value="1"/>
</dbReference>
<dbReference type="FunFam" id="1.10.510.10:FF:000043">
    <property type="entry name" value="probable serine/threonine-protein kinase At1g54610"/>
    <property type="match status" value="1"/>
</dbReference>
<dbReference type="FunFam" id="3.30.200.20:FF:000021">
    <property type="entry name" value="probable serine/threonine-protein kinase At1g54610"/>
    <property type="match status" value="1"/>
</dbReference>
<dbReference type="Gene3D" id="3.30.200.20">
    <property type="entry name" value="Phosphorylase Kinase, domain 1"/>
    <property type="match status" value="1"/>
</dbReference>
<dbReference type="Gene3D" id="1.10.510.10">
    <property type="entry name" value="Transferase(Phosphotransferase) domain 1"/>
    <property type="match status" value="1"/>
</dbReference>
<dbReference type="InterPro" id="IPR050108">
    <property type="entry name" value="CDK"/>
</dbReference>
<dbReference type="InterPro" id="IPR011009">
    <property type="entry name" value="Kinase-like_dom_sf"/>
</dbReference>
<dbReference type="InterPro" id="IPR000719">
    <property type="entry name" value="Prot_kinase_dom"/>
</dbReference>
<dbReference type="InterPro" id="IPR017441">
    <property type="entry name" value="Protein_kinase_ATP_BS"/>
</dbReference>
<dbReference type="InterPro" id="IPR008271">
    <property type="entry name" value="Ser/Thr_kinase_AS"/>
</dbReference>
<dbReference type="PANTHER" id="PTHR24056">
    <property type="entry name" value="CELL DIVISION PROTEIN KINASE"/>
    <property type="match status" value="1"/>
</dbReference>
<dbReference type="PANTHER" id="PTHR24056:SF188">
    <property type="entry name" value="CYCLIN-DEPENDENT KINASE C-2 C"/>
    <property type="match status" value="1"/>
</dbReference>
<dbReference type="Pfam" id="PF00069">
    <property type="entry name" value="Pkinase"/>
    <property type="match status" value="1"/>
</dbReference>
<dbReference type="SMART" id="SM00220">
    <property type="entry name" value="S_TKc"/>
    <property type="match status" value="1"/>
</dbReference>
<dbReference type="SUPFAM" id="SSF56112">
    <property type="entry name" value="Protein kinase-like (PK-like)"/>
    <property type="match status" value="1"/>
</dbReference>
<dbReference type="PROSITE" id="PS00107">
    <property type="entry name" value="PROTEIN_KINASE_ATP"/>
    <property type="match status" value="1"/>
</dbReference>
<dbReference type="PROSITE" id="PS50011">
    <property type="entry name" value="PROTEIN_KINASE_DOM"/>
    <property type="match status" value="1"/>
</dbReference>
<dbReference type="PROSITE" id="PS00108">
    <property type="entry name" value="PROTEIN_KINASE_ST"/>
    <property type="match status" value="1"/>
</dbReference>
<reference key="1">
    <citation type="submission" date="1996-12" db="EMBL/GenBank/DDBJ databases">
        <authorList>
            <person name="Lessard P."/>
            <person name="Petit-Jean X."/>
            <person name="Kreis M."/>
            <person name="Thomas M."/>
        </authorList>
    </citation>
    <scope>NUCLEOTIDE SEQUENCE [GENOMIC DNA]</scope>
    <source>
        <strain>cv. Columbia</strain>
    </source>
</reference>
<reference key="2">
    <citation type="journal article" date="1999" name="Biochim. Biophys. Acta">
        <title>Identification of cdc2cAt: a new cyclin-dependent kinase expressed in Arabidopsis thaliana flowers.</title>
        <authorList>
            <person name="Lessard P."/>
            <person name="Bouly J.-P."/>
            <person name="Jouannic S."/>
            <person name="Kreis M."/>
            <person name="Thomas M."/>
        </authorList>
    </citation>
    <scope>NUCLEOTIDE SEQUENCE [MRNA]</scope>
    <scope>TISSUE SPECIFICITY</scope>
</reference>
<reference key="3">
    <citation type="journal article" date="1998" name="DNA Res.">
        <title>Structural analysis of Arabidopsis thaliana chromosome 5. IV. Sequence features of the regions of 1,456,315 bp covered by nineteen physically assigned P1 and TAC clones.</title>
        <authorList>
            <person name="Sato S."/>
            <person name="Kaneko T."/>
            <person name="Kotani H."/>
            <person name="Nakamura Y."/>
            <person name="Asamizu E."/>
            <person name="Miyajima N."/>
            <person name="Tabata S."/>
        </authorList>
    </citation>
    <scope>NUCLEOTIDE SEQUENCE [LARGE SCALE GENOMIC DNA]</scope>
    <source>
        <strain>cv. Columbia</strain>
    </source>
</reference>
<reference key="4">
    <citation type="journal article" date="2017" name="Plant J.">
        <title>Araport11: a complete reannotation of the Arabidopsis thaliana reference genome.</title>
        <authorList>
            <person name="Cheng C.Y."/>
            <person name="Krishnakumar V."/>
            <person name="Chan A.P."/>
            <person name="Thibaud-Nissen F."/>
            <person name="Schobel S."/>
            <person name="Town C.D."/>
        </authorList>
    </citation>
    <scope>GENOME REANNOTATION</scope>
    <source>
        <strain>cv. Columbia</strain>
    </source>
</reference>
<reference key="5">
    <citation type="submission" date="2008-10" db="EMBL/GenBank/DDBJ databases">
        <title>Arabidopsis ORF clones.</title>
        <authorList>
            <person name="de los Reyes C."/>
            <person name="Quan R."/>
            <person name="Chen H."/>
            <person name="Bautista V."/>
            <person name="Kim C.J."/>
            <person name="Ecker J.R."/>
        </authorList>
    </citation>
    <scope>NUCLEOTIDE SEQUENCE [LARGE SCALE MRNA]</scope>
    <source>
        <strain>cv. Columbia</strain>
    </source>
</reference>
<reference key="6">
    <citation type="journal article" date="2005" name="Plant J.">
        <title>Global analysis of the core cell cycle regulators of Arabidopsis identifies novel genes, reveals multiple and highly specific profiles of expression and provides a coherent model for plant cell cycle control.</title>
        <authorList>
            <person name="Menges M."/>
            <person name="de Jager S.M."/>
            <person name="Gruissem W."/>
            <person name="Murray J.A.H."/>
        </authorList>
    </citation>
    <scope>TISSUE SPECIFICITY</scope>
    <scope>GENE FAMILY</scope>
    <scope>NOMENCLATURE</scope>
</reference>
<reference key="7">
    <citation type="journal article" date="2011" name="Phytochemistry">
        <title>Autophosphorylation profiling of Arabidopsis protein kinases using the cell-free system.</title>
        <authorList>
            <person name="Nemoto K."/>
            <person name="Seto T."/>
            <person name="Takahashi H."/>
            <person name="Nozawa A."/>
            <person name="Seki M."/>
            <person name="Shinozaki K."/>
            <person name="Endo Y."/>
            <person name="Sawasaki T."/>
        </authorList>
    </citation>
    <scope>AUTOPHOSPHORYLATION</scope>
</reference>
<reference key="8">
    <citation type="journal article" date="2013" name="PLoS ONE">
        <title>Analysis of essential Arabidopsis nuclear genes encoding plastid-targeted proteins.</title>
        <authorList>
            <person name="Savage L.J."/>
            <person name="Imre K.M."/>
            <person name="Hall D.A."/>
            <person name="Last R.L."/>
        </authorList>
    </citation>
    <scope>DISRUPTION PHENOTYPE</scope>
</reference>
<comment type="subcellular location">
    <subcellularLocation>
        <location evidence="4">Nucleus</location>
    </subcellularLocation>
</comment>
<comment type="tissue specificity">
    <text evidence="7 8">Expressed specifically in flowers and pollen.</text>
</comment>
<comment type="domain">
    <text evidence="3">The protein kinase domain is predicted to be catalytically inactive.</text>
</comment>
<comment type="PTM">
    <text evidence="9">Autophosphorylated.</text>
</comment>
<comment type="disruption phenotype">
    <text evidence="10">Light green to yellow seeds.</text>
</comment>
<comment type="similarity">
    <text evidence="3">Belongs to the protein kinase superfamily. CMGC Ser/Thr protein kinase family. CDC2/CDKX subfamily.</text>
</comment>
<comment type="sequence caution" evidence="13">
    <conflict type="erroneous gene model prediction">
        <sequence resource="EMBL-CDS" id="AAF21469"/>
    </conflict>
</comment>
<comment type="sequence caution" evidence="13">
    <conflict type="erroneous gene model prediction">
        <sequence resource="EMBL-CDS" id="BAB11015"/>
    </conflict>
</comment>
<sequence length="644" mass="72425">MGCISSKNVSCLTDQGDSPLPEPGLLSTSQQHRVLIDHSLEASHNSKRSRKSRRLGGSDLRIGVSLGSSHRNIEAEQAAAGWPAWLCSAAAEAVHGWVPLKAEAFQKLEKIGQGTYSSVFRAREVETGKMVALKKVKFDNLQPESIRFMAREILILRKLNHPNIMKLEGIVTSRASSSIYLVFEYMEHDLAGLSSNPDIRFTEPQIKCYMKQLLWGLEHCHMRGVIHRDIKASNILVNNKGVLKLGDFGLANVVTPSNKNQLTSRVVTLWYRAPELLMGSTSYGVSVDLWSVGCVFAEILMGKPILKGRTEIEQLHKIYKLCGSPQDSFWKRTKLPHATSFKPQHTYEATLRERCKDLSATGVYLLETLLSMEPDKRGTASSALNSEYFLTRPYACDPSSLPKYPPNKEMDAKYRDDMRRKRANLKLRDSGVGRKHKRPHRAEYDPKNYAKLPIRKDTLEVKNIPNEASRATTTTHGNYYKVSDLPMTTGPASGFAWAVKRRKDPDNISTLTYYQPSSKSQLSGTSVAFAKNTFGLNLKPDNDSVWEVQGNNYDDVIEEVPSHESKLSRIGERHGSLDGSGLDFSQREEDSPKKTLEHLQFGKQSISGPLIFKSGKIDEILQRNESNIRQAVRKSHLQREQDDR</sequence>
<evidence type="ECO:0000250" key="1">
    <source>
        <dbReference type="UniProtKB" id="P24100"/>
    </source>
</evidence>
<evidence type="ECO:0000250" key="2">
    <source>
        <dbReference type="UniProtKB" id="Q9C9M7"/>
    </source>
</evidence>
<evidence type="ECO:0000255" key="3">
    <source>
        <dbReference type="PROSITE-ProRule" id="PRU00159"/>
    </source>
</evidence>
<evidence type="ECO:0000255" key="4">
    <source>
        <dbReference type="PROSITE-ProRule" id="PRU00768"/>
    </source>
</evidence>
<evidence type="ECO:0000255" key="5">
    <source>
        <dbReference type="PROSITE-ProRule" id="PRU10027"/>
    </source>
</evidence>
<evidence type="ECO:0000256" key="6">
    <source>
        <dbReference type="SAM" id="MobiDB-lite"/>
    </source>
</evidence>
<evidence type="ECO:0000269" key="7">
    <source>
    </source>
</evidence>
<evidence type="ECO:0000269" key="8">
    <source>
    </source>
</evidence>
<evidence type="ECO:0000269" key="9">
    <source>
    </source>
</evidence>
<evidence type="ECO:0000269" key="10">
    <source>
    </source>
</evidence>
<evidence type="ECO:0000303" key="11">
    <source>
    </source>
</evidence>
<evidence type="ECO:0000303" key="12">
    <source>
    </source>
</evidence>
<evidence type="ECO:0000305" key="13"/>
<evidence type="ECO:0000312" key="14">
    <source>
        <dbReference type="Araport" id="AT5G39420"/>
    </source>
</evidence>
<evidence type="ECO:0000312" key="15">
    <source>
        <dbReference type="EMBL" id="AED94431.1"/>
    </source>
</evidence>
<proteinExistence type="evidence at protein level"/>